<feature type="chain" id="PRO_1000100876" description="ATP-dependent protease subunit HslV">
    <location>
        <begin position="1"/>
        <end position="178"/>
    </location>
</feature>
<feature type="active site" evidence="1">
    <location>
        <position position="7"/>
    </location>
</feature>
<feature type="binding site" evidence="1">
    <location>
        <position position="162"/>
    </location>
    <ligand>
        <name>Na(+)</name>
        <dbReference type="ChEBI" id="CHEBI:29101"/>
    </ligand>
</feature>
<feature type="binding site" evidence="1">
    <location>
        <position position="165"/>
    </location>
    <ligand>
        <name>Na(+)</name>
        <dbReference type="ChEBI" id="CHEBI:29101"/>
    </ligand>
</feature>
<feature type="binding site" evidence="1">
    <location>
        <position position="168"/>
    </location>
    <ligand>
        <name>Na(+)</name>
        <dbReference type="ChEBI" id="CHEBI:29101"/>
    </ligand>
</feature>
<organism>
    <name type="scientific">Burkholderia ambifaria (strain MC40-6)</name>
    <dbReference type="NCBI Taxonomy" id="398577"/>
    <lineage>
        <taxon>Bacteria</taxon>
        <taxon>Pseudomonadati</taxon>
        <taxon>Pseudomonadota</taxon>
        <taxon>Betaproteobacteria</taxon>
        <taxon>Burkholderiales</taxon>
        <taxon>Burkholderiaceae</taxon>
        <taxon>Burkholderia</taxon>
        <taxon>Burkholderia cepacia complex</taxon>
    </lineage>
</organism>
<comment type="function">
    <text evidence="1">Protease subunit of a proteasome-like degradation complex believed to be a general protein degrading machinery.</text>
</comment>
<comment type="catalytic activity">
    <reaction evidence="1">
        <text>ATP-dependent cleavage of peptide bonds with broad specificity.</text>
        <dbReference type="EC" id="3.4.25.2"/>
    </reaction>
</comment>
<comment type="activity regulation">
    <text evidence="1">Allosterically activated by HslU binding.</text>
</comment>
<comment type="subunit">
    <text evidence="1">A double ring-shaped homohexamer of HslV is capped on each side by a ring-shaped HslU homohexamer. The assembly of the HslU/HslV complex is dependent on binding of ATP.</text>
</comment>
<comment type="subcellular location">
    <subcellularLocation>
        <location evidence="1">Cytoplasm</location>
    </subcellularLocation>
</comment>
<comment type="similarity">
    <text evidence="1">Belongs to the peptidase T1B family. HslV subfamily.</text>
</comment>
<keyword id="KW-0021">Allosteric enzyme</keyword>
<keyword id="KW-0963">Cytoplasm</keyword>
<keyword id="KW-0378">Hydrolase</keyword>
<keyword id="KW-0479">Metal-binding</keyword>
<keyword id="KW-0645">Protease</keyword>
<keyword id="KW-0915">Sodium</keyword>
<keyword id="KW-0888">Threonine protease</keyword>
<evidence type="ECO:0000255" key="1">
    <source>
        <dbReference type="HAMAP-Rule" id="MF_00248"/>
    </source>
</evidence>
<protein>
    <recommendedName>
        <fullName evidence="1">ATP-dependent protease subunit HslV</fullName>
        <ecNumber evidence="1">3.4.25.2</ecNumber>
    </recommendedName>
</protein>
<accession>B1YPR2</accession>
<name>HSLV_BURA4</name>
<gene>
    <name evidence="1" type="primary">hslV</name>
    <name type="ordered locus">BamMC406_3000</name>
</gene>
<dbReference type="EC" id="3.4.25.2" evidence="1"/>
<dbReference type="EMBL" id="CP001025">
    <property type="protein sequence ID" value="ACB65476.1"/>
    <property type="molecule type" value="Genomic_DNA"/>
</dbReference>
<dbReference type="RefSeq" id="WP_006760749.1">
    <property type="nucleotide sequence ID" value="NC_010551.1"/>
</dbReference>
<dbReference type="SMR" id="B1YPR2"/>
<dbReference type="MEROPS" id="T01.006"/>
<dbReference type="GeneID" id="93145875"/>
<dbReference type="KEGG" id="bac:BamMC406_3000"/>
<dbReference type="HOGENOM" id="CLU_093872_1_0_4"/>
<dbReference type="OrthoDB" id="9804884at2"/>
<dbReference type="Proteomes" id="UP000001680">
    <property type="component" value="Chromosome 1"/>
</dbReference>
<dbReference type="GO" id="GO:0009376">
    <property type="term" value="C:HslUV protease complex"/>
    <property type="evidence" value="ECO:0007669"/>
    <property type="project" value="UniProtKB-UniRule"/>
</dbReference>
<dbReference type="GO" id="GO:0005839">
    <property type="term" value="C:proteasome core complex"/>
    <property type="evidence" value="ECO:0007669"/>
    <property type="project" value="InterPro"/>
</dbReference>
<dbReference type="GO" id="GO:0046872">
    <property type="term" value="F:metal ion binding"/>
    <property type="evidence" value="ECO:0007669"/>
    <property type="project" value="UniProtKB-KW"/>
</dbReference>
<dbReference type="GO" id="GO:0004298">
    <property type="term" value="F:threonine-type endopeptidase activity"/>
    <property type="evidence" value="ECO:0007669"/>
    <property type="project" value="UniProtKB-KW"/>
</dbReference>
<dbReference type="GO" id="GO:0051603">
    <property type="term" value="P:proteolysis involved in protein catabolic process"/>
    <property type="evidence" value="ECO:0007669"/>
    <property type="project" value="InterPro"/>
</dbReference>
<dbReference type="CDD" id="cd01913">
    <property type="entry name" value="protease_HslV"/>
    <property type="match status" value="1"/>
</dbReference>
<dbReference type="FunFam" id="3.60.20.10:FF:000002">
    <property type="entry name" value="ATP-dependent protease subunit HslV"/>
    <property type="match status" value="1"/>
</dbReference>
<dbReference type="Gene3D" id="3.60.20.10">
    <property type="entry name" value="Glutamine Phosphoribosylpyrophosphate, subunit 1, domain 1"/>
    <property type="match status" value="1"/>
</dbReference>
<dbReference type="HAMAP" id="MF_00248">
    <property type="entry name" value="HslV"/>
    <property type="match status" value="1"/>
</dbReference>
<dbReference type="InterPro" id="IPR022281">
    <property type="entry name" value="ATP-dep_Prtase_HsIV_su"/>
</dbReference>
<dbReference type="InterPro" id="IPR029055">
    <property type="entry name" value="Ntn_hydrolases_N"/>
</dbReference>
<dbReference type="InterPro" id="IPR001353">
    <property type="entry name" value="Proteasome_sua/b"/>
</dbReference>
<dbReference type="InterPro" id="IPR023333">
    <property type="entry name" value="Proteasome_suB-type"/>
</dbReference>
<dbReference type="NCBIfam" id="TIGR03692">
    <property type="entry name" value="ATP_dep_HslV"/>
    <property type="match status" value="1"/>
</dbReference>
<dbReference type="NCBIfam" id="NF003964">
    <property type="entry name" value="PRK05456.1"/>
    <property type="match status" value="1"/>
</dbReference>
<dbReference type="PANTHER" id="PTHR32194:SF0">
    <property type="entry name" value="ATP-DEPENDENT PROTEASE SUBUNIT HSLV"/>
    <property type="match status" value="1"/>
</dbReference>
<dbReference type="PANTHER" id="PTHR32194">
    <property type="entry name" value="METALLOPROTEASE TLDD"/>
    <property type="match status" value="1"/>
</dbReference>
<dbReference type="Pfam" id="PF00227">
    <property type="entry name" value="Proteasome"/>
    <property type="match status" value="1"/>
</dbReference>
<dbReference type="PIRSF" id="PIRSF039093">
    <property type="entry name" value="HslV"/>
    <property type="match status" value="1"/>
</dbReference>
<dbReference type="SUPFAM" id="SSF56235">
    <property type="entry name" value="N-terminal nucleophile aminohydrolases (Ntn hydrolases)"/>
    <property type="match status" value="1"/>
</dbReference>
<dbReference type="PROSITE" id="PS51476">
    <property type="entry name" value="PROTEASOME_BETA_2"/>
    <property type="match status" value="1"/>
</dbReference>
<reference key="1">
    <citation type="submission" date="2008-04" db="EMBL/GenBank/DDBJ databases">
        <title>Complete sequence of chromosome 1 of Burkholderia ambifaria MC40-6.</title>
        <authorList>
            <person name="Copeland A."/>
            <person name="Lucas S."/>
            <person name="Lapidus A."/>
            <person name="Glavina del Rio T."/>
            <person name="Dalin E."/>
            <person name="Tice H."/>
            <person name="Pitluck S."/>
            <person name="Chain P."/>
            <person name="Malfatti S."/>
            <person name="Shin M."/>
            <person name="Vergez L."/>
            <person name="Lang D."/>
            <person name="Schmutz J."/>
            <person name="Larimer F."/>
            <person name="Land M."/>
            <person name="Hauser L."/>
            <person name="Kyrpides N."/>
            <person name="Lykidis A."/>
            <person name="Ramette A."/>
            <person name="Konstantinidis K."/>
            <person name="Tiedje J."/>
            <person name="Richardson P."/>
        </authorList>
    </citation>
    <scope>NUCLEOTIDE SEQUENCE [LARGE SCALE GENOMIC DNA]</scope>
    <source>
        <strain>MC40-6</strain>
    </source>
</reference>
<sequence>MEQFHGTTIVSVRRGDKVALGGDGQVTLGNIVMKGGARKVRRIYNNQVLVGFAGGTADAFSLLDRFEAKLEKHQGNLTRAAVELAKDWRTDRMLRRLEAMLITADATTTLVITGNGDVLDPEGGICAIGSGGAYAQAAARALAENTELSPREIVEKSLEIAGDMCIYTNHNRIIETIE</sequence>
<proteinExistence type="inferred from homology"/>